<protein>
    <recommendedName>
        <fullName evidence="1">UPF0756 membrane protein YeaL</fullName>
    </recommendedName>
</protein>
<evidence type="ECO:0000255" key="1">
    <source>
        <dbReference type="HAMAP-Rule" id="MF_01874"/>
    </source>
</evidence>
<accession>Q57Q14</accession>
<feature type="chain" id="PRO_0000388923" description="UPF0756 membrane protein YeaL">
    <location>
        <begin position="1"/>
        <end position="148"/>
    </location>
</feature>
<feature type="transmembrane region" description="Helical" evidence="1">
    <location>
        <begin position="14"/>
        <end position="34"/>
    </location>
</feature>
<feature type="transmembrane region" description="Helical" evidence="1">
    <location>
        <begin position="51"/>
        <end position="71"/>
    </location>
</feature>
<feature type="transmembrane region" description="Helical" evidence="1">
    <location>
        <begin position="86"/>
        <end position="106"/>
    </location>
</feature>
<feature type="transmembrane region" description="Helical" evidence="1">
    <location>
        <begin position="121"/>
        <end position="141"/>
    </location>
</feature>
<name>YEAL_SALCH</name>
<comment type="subcellular location">
    <subcellularLocation>
        <location evidence="1">Cell membrane</location>
        <topology evidence="1">Multi-pass membrane protein</topology>
    </subcellularLocation>
</comment>
<comment type="similarity">
    <text evidence="1">Belongs to the UPF0756 family.</text>
</comment>
<gene>
    <name evidence="1" type="primary">yeaL</name>
    <name type="ordered locus">SCH_1291</name>
</gene>
<proteinExistence type="inferred from homology"/>
<keyword id="KW-1003">Cell membrane</keyword>
<keyword id="KW-0472">Membrane</keyword>
<keyword id="KW-0812">Transmembrane</keyword>
<keyword id="KW-1133">Transmembrane helix</keyword>
<dbReference type="EMBL" id="AE017220">
    <property type="protein sequence ID" value="AAX65197.1"/>
    <property type="molecule type" value="Genomic_DNA"/>
</dbReference>
<dbReference type="RefSeq" id="WP_000460698.1">
    <property type="nucleotide sequence ID" value="NC_006905.1"/>
</dbReference>
<dbReference type="KEGG" id="sec:SCH_1291"/>
<dbReference type="HOGENOM" id="CLU_125889_0_0_6"/>
<dbReference type="Proteomes" id="UP000000538">
    <property type="component" value="Chromosome"/>
</dbReference>
<dbReference type="GO" id="GO:0005886">
    <property type="term" value="C:plasma membrane"/>
    <property type="evidence" value="ECO:0007669"/>
    <property type="project" value="UniProtKB-SubCell"/>
</dbReference>
<dbReference type="HAMAP" id="MF_01874">
    <property type="entry name" value="UPF0756"/>
    <property type="match status" value="1"/>
</dbReference>
<dbReference type="InterPro" id="IPR007382">
    <property type="entry name" value="UPF0756_TM"/>
</dbReference>
<dbReference type="PANTHER" id="PTHR38452">
    <property type="entry name" value="UPF0756 MEMBRANE PROTEIN YEAL"/>
    <property type="match status" value="1"/>
</dbReference>
<dbReference type="PANTHER" id="PTHR38452:SF1">
    <property type="entry name" value="UPF0756 MEMBRANE PROTEIN YEAL"/>
    <property type="match status" value="1"/>
</dbReference>
<dbReference type="Pfam" id="PF04284">
    <property type="entry name" value="DUF441"/>
    <property type="match status" value="1"/>
</dbReference>
<organism>
    <name type="scientific">Salmonella choleraesuis (strain SC-B67)</name>
    <dbReference type="NCBI Taxonomy" id="321314"/>
    <lineage>
        <taxon>Bacteria</taxon>
        <taxon>Pseudomonadati</taxon>
        <taxon>Pseudomonadota</taxon>
        <taxon>Gammaproteobacteria</taxon>
        <taxon>Enterobacterales</taxon>
        <taxon>Enterobacteriaceae</taxon>
        <taxon>Salmonella</taxon>
    </lineage>
</organism>
<sequence length="148" mass="15344">MFDVTLLILLGLAALGFISHNTTVAVSILVLIIVRVTPLNTFFPWIEKQGLTVGIIILTIGVMAPIASGTLPPSTLIHSFVNWKSLVAIAVGVFVSWLGGRGITLMGNQPQLVAGLLVGTVLGVALFRGVPVGPLIAAGLVSLIVGKQ</sequence>
<reference key="1">
    <citation type="journal article" date="2005" name="Nucleic Acids Res.">
        <title>The genome sequence of Salmonella enterica serovar Choleraesuis, a highly invasive and resistant zoonotic pathogen.</title>
        <authorList>
            <person name="Chiu C.-H."/>
            <person name="Tang P."/>
            <person name="Chu C."/>
            <person name="Hu S."/>
            <person name="Bao Q."/>
            <person name="Yu J."/>
            <person name="Chou Y.-Y."/>
            <person name="Wang H.-S."/>
            <person name="Lee Y.-S."/>
        </authorList>
    </citation>
    <scope>NUCLEOTIDE SEQUENCE [LARGE SCALE GENOMIC DNA]</scope>
    <source>
        <strain>SC-B67</strain>
    </source>
</reference>